<gene>
    <name type="primary">PHO1-H10</name>
    <name type="ordered locus">At1g69480</name>
    <name type="ORF">F10D13.13</name>
</gene>
<keyword id="KW-1003">Cell membrane</keyword>
<keyword id="KW-0472">Membrane</keyword>
<keyword id="KW-0592">Phosphate transport</keyword>
<keyword id="KW-1185">Reference proteome</keyword>
<keyword id="KW-0812">Transmembrane</keyword>
<keyword id="KW-1133">Transmembrane helix</keyword>
<keyword id="KW-0813">Transport</keyword>
<accession>Q6R8G0</accession>
<accession>Q9C789</accession>
<name>PHO1A_ARATH</name>
<comment type="function">
    <text evidence="1">May transport inorganic phosphate (Pi).</text>
</comment>
<comment type="subcellular location">
    <subcellularLocation>
        <location evidence="8">Cell membrane</location>
        <topology evidence="8">Multi-pass membrane protein</topology>
    </subcellularLocation>
</comment>
<comment type="tissue specificity">
    <text evidence="5 7">Expressed in root epidermis and cortex, leaf blades and hydathodes, stems and flowers.</text>
</comment>
<comment type="induction">
    <text evidence="5 6 7">By wounding, dehydration, salt and cold treatments, osmotic shock and infection by P.syringae pv. tomato in leaves. Induced by salt treatment in roots. Induced by auxin, cytokinin, abscisic acid (ABA) and 12-oxo-phytodienoic acid (OPDA), but not by jasmonic acid (JA). Induced by Pi deficiency in roots and leaves. Down-regulated by sucrose.</text>
</comment>
<comment type="similarity">
    <text evidence="8">Belongs to the SYG1 (TC 2.A.94) family.</text>
</comment>
<reference key="1">
    <citation type="journal article" date="2004" name="Plant Physiol.">
        <title>Structure and expression profile of the Arabidopsis PHO1 gene family indicates a broad role in inorganic phosphate homeostasis.</title>
        <authorList>
            <person name="Wang Y."/>
            <person name="Ribot C."/>
            <person name="Rezzonico E."/>
            <person name="Poirier Y."/>
        </authorList>
    </citation>
    <scope>NUCLEOTIDE SEQUENCE [MRNA]</scope>
    <scope>TISSUE SPECIFICITY</scope>
    <scope>INDUCTION</scope>
    <scope>GENE FAMILY</scope>
    <scope>NOMENCLATURE</scope>
</reference>
<reference key="2">
    <citation type="journal article" date="2000" name="Nature">
        <title>Sequence and analysis of chromosome 1 of the plant Arabidopsis thaliana.</title>
        <authorList>
            <person name="Theologis A."/>
            <person name="Ecker J.R."/>
            <person name="Palm C.J."/>
            <person name="Federspiel N.A."/>
            <person name="Kaul S."/>
            <person name="White O."/>
            <person name="Alonso J."/>
            <person name="Altafi H."/>
            <person name="Araujo R."/>
            <person name="Bowman C.L."/>
            <person name="Brooks S.Y."/>
            <person name="Buehler E."/>
            <person name="Chan A."/>
            <person name="Chao Q."/>
            <person name="Chen H."/>
            <person name="Cheuk R.F."/>
            <person name="Chin C.W."/>
            <person name="Chung M.K."/>
            <person name="Conn L."/>
            <person name="Conway A.B."/>
            <person name="Conway A.R."/>
            <person name="Creasy T.H."/>
            <person name="Dewar K."/>
            <person name="Dunn P."/>
            <person name="Etgu P."/>
            <person name="Feldblyum T.V."/>
            <person name="Feng J.-D."/>
            <person name="Fong B."/>
            <person name="Fujii C.Y."/>
            <person name="Gill J.E."/>
            <person name="Goldsmith A.D."/>
            <person name="Haas B."/>
            <person name="Hansen N.F."/>
            <person name="Hughes B."/>
            <person name="Huizar L."/>
            <person name="Hunter J.L."/>
            <person name="Jenkins J."/>
            <person name="Johnson-Hopson C."/>
            <person name="Khan S."/>
            <person name="Khaykin E."/>
            <person name="Kim C.J."/>
            <person name="Koo H.L."/>
            <person name="Kremenetskaia I."/>
            <person name="Kurtz D.B."/>
            <person name="Kwan A."/>
            <person name="Lam B."/>
            <person name="Langin-Hooper S."/>
            <person name="Lee A."/>
            <person name="Lee J.M."/>
            <person name="Lenz C.A."/>
            <person name="Li J.H."/>
            <person name="Li Y.-P."/>
            <person name="Lin X."/>
            <person name="Liu S.X."/>
            <person name="Liu Z.A."/>
            <person name="Luros J.S."/>
            <person name="Maiti R."/>
            <person name="Marziali A."/>
            <person name="Militscher J."/>
            <person name="Miranda M."/>
            <person name="Nguyen M."/>
            <person name="Nierman W.C."/>
            <person name="Osborne B.I."/>
            <person name="Pai G."/>
            <person name="Peterson J."/>
            <person name="Pham P.K."/>
            <person name="Rizzo M."/>
            <person name="Rooney T."/>
            <person name="Rowley D."/>
            <person name="Sakano H."/>
            <person name="Salzberg S.L."/>
            <person name="Schwartz J.R."/>
            <person name="Shinn P."/>
            <person name="Southwick A.M."/>
            <person name="Sun H."/>
            <person name="Tallon L.J."/>
            <person name="Tambunga G."/>
            <person name="Toriumi M.J."/>
            <person name="Town C.D."/>
            <person name="Utterback T."/>
            <person name="Van Aken S."/>
            <person name="Vaysberg M."/>
            <person name="Vysotskaia V.S."/>
            <person name="Walker M."/>
            <person name="Wu D."/>
            <person name="Yu G."/>
            <person name="Fraser C.M."/>
            <person name="Venter J.C."/>
            <person name="Davis R.W."/>
        </authorList>
    </citation>
    <scope>NUCLEOTIDE SEQUENCE [LARGE SCALE GENOMIC DNA]</scope>
    <source>
        <strain>cv. Columbia</strain>
    </source>
</reference>
<reference key="3">
    <citation type="journal article" date="2017" name="Plant J.">
        <title>Araport11: a complete reannotation of the Arabidopsis thaliana reference genome.</title>
        <authorList>
            <person name="Cheng C.Y."/>
            <person name="Krishnakumar V."/>
            <person name="Chan A.P."/>
            <person name="Thibaud-Nissen F."/>
            <person name="Schobel S."/>
            <person name="Town C.D."/>
        </authorList>
    </citation>
    <scope>GENOME REANNOTATION</scope>
    <source>
        <strain>cv. Columbia</strain>
    </source>
</reference>
<reference key="4">
    <citation type="journal article" date="2008" name="Planta">
        <title>Expression analyses of three members of the AtPHO1 family reveal differential interactions between signaling pathways involved in phosphate deficiency and the responses to auxin, cytokinin, and abscisic acid.</title>
        <authorList>
            <person name="Ribot C."/>
            <person name="Wang Y."/>
            <person name="Poirier Y."/>
        </authorList>
    </citation>
    <scope>INDUCTION</scope>
</reference>
<reference key="5">
    <citation type="journal article" date="2008" name="Plant Physiol.">
        <title>Induction of the Arabidopsis PHO1;H10 gene by 12-oxo-phytodienoic acid but not jasmonic acid via a CORONATINE INSENSITIVE1-dependent pathway.</title>
        <authorList>
            <person name="Ribot C."/>
            <person name="Zimmerli C."/>
            <person name="Farmer E.E."/>
            <person name="Reymond P."/>
            <person name="Poirier Y."/>
        </authorList>
    </citation>
    <scope>TISSUE SPECIFICITY</scope>
    <scope>INDUCTION</scope>
</reference>
<feature type="chain" id="PRO_0000398164" description="Phosphate transporter PHO1 homolog 10">
    <location>
        <begin position="1"/>
        <end position="777"/>
    </location>
</feature>
<feature type="topological domain" description="Cytoplasmic" evidence="2">
    <location>
        <begin position="1"/>
        <end position="372"/>
    </location>
</feature>
<feature type="transmembrane region" description="Helical" evidence="2">
    <location>
        <begin position="373"/>
        <end position="393"/>
    </location>
</feature>
<feature type="topological domain" description="Extracellular" evidence="2">
    <location>
        <begin position="394"/>
        <end position="408"/>
    </location>
</feature>
<feature type="transmembrane region" description="Helical" evidence="2">
    <location>
        <begin position="409"/>
        <end position="429"/>
    </location>
</feature>
<feature type="topological domain" description="Cytoplasmic" evidence="2">
    <location>
        <begin position="430"/>
        <end position="459"/>
    </location>
</feature>
<feature type="transmembrane region" description="Helical" evidence="2">
    <location>
        <begin position="460"/>
        <end position="480"/>
    </location>
</feature>
<feature type="topological domain" description="Extracellular" evidence="2">
    <location>
        <begin position="481"/>
        <end position="496"/>
    </location>
</feature>
<feature type="transmembrane region" description="Helical" evidence="2">
    <location>
        <begin position="497"/>
        <end position="517"/>
    </location>
</feature>
<feature type="topological domain" description="Cytoplasmic" evidence="2">
    <location>
        <begin position="518"/>
        <end position="646"/>
    </location>
</feature>
<feature type="transmembrane region" description="Helical" evidence="2">
    <location>
        <begin position="647"/>
        <end position="667"/>
    </location>
</feature>
<feature type="topological domain" description="Extracellular" evidence="2">
    <location>
        <begin position="668"/>
        <end position="691"/>
    </location>
</feature>
<feature type="transmembrane region" description="Helical" evidence="2">
    <location>
        <begin position="692"/>
        <end position="712"/>
    </location>
</feature>
<feature type="topological domain" description="Cytoplasmic" evidence="2">
    <location>
        <begin position="713"/>
        <end position="777"/>
    </location>
</feature>
<feature type="domain" description="SPX" evidence="4">
    <location>
        <begin position="1"/>
        <end position="322"/>
    </location>
</feature>
<feature type="domain" description="EXS" evidence="3">
    <location>
        <begin position="581"/>
        <end position="775"/>
    </location>
</feature>
<feature type="sequence conflict" description="In Ref. 2; AAG60105." evidence="8" ref="2">
    <original>V</original>
    <variation>M</variation>
    <location>
        <position position="699"/>
    </location>
</feature>
<proteinExistence type="evidence at transcript level"/>
<sequence>MKFGKIFKKQMVPEWVEAYVDYNGLKRVLKEIRSYKHSKLTRAASRVSQQAEALHRSFSGLSFHPRHSERAGDIEDQVIKVDTVQEEGSRKLYETKFLKKSEEGGEFEESFFKKLDENLNKVNKFYRDKVKEVIEEAALLDKQMDALIALRVKMQKPDVDNLNLEKHPSDKVVVDTSDNTMRTQGTANTDMVHGIERTNIPEEEASHIMADIVPVSHTNGDEEEASIGDKQDLREILERVKMNDVLESPITTLKGVFGDSNEPISKKGLKKGEEQLRLVFSEFYQKLRRLKEYSFMNLLAFSKIMKKYEKIASRNASRNYMKIVDNSLIGSSDEVNRLLERVEVTFVKHFSSGNRREGMKCLRPKVKRERHRVTFFSGFFSGCSIALVIAVVFKIESRKIMEKNYGTEYMANIIPLYSLFGFIILHMLMYSANIYFWKRYRVNYTFIFGFKQGTELGDREVFLVSTGLAVLAFVCFLLNLQLDMDWRMKHHKTLPEVIPLCLATIVLFILFCPFNIIYRSSRFFFIRSLFHCICAPLYEVTLPDFFLGDHLTSQIQAIRSFELFICYYGLGEYLQRQNKCHSHGVYNAFYFVVAVIPYWLRFLQCIRRLCEEKESVHGYNALKYMLTIIAVIVRTAYELKKGRTWMILALVSSGVATGMNTFWDIVIDWGLLRKHSKNPYLRDKLLVPHKSVYFAAMVVNVILRVAWMQLVLEFNLKSLHKIAVTSIISCLEIIRRGIWSFFRLENEHLNNVGKYRAFKSVPHPFHYYDDDDVDKDD</sequence>
<organism>
    <name type="scientific">Arabidopsis thaliana</name>
    <name type="common">Mouse-ear cress</name>
    <dbReference type="NCBI Taxonomy" id="3702"/>
    <lineage>
        <taxon>Eukaryota</taxon>
        <taxon>Viridiplantae</taxon>
        <taxon>Streptophyta</taxon>
        <taxon>Embryophyta</taxon>
        <taxon>Tracheophyta</taxon>
        <taxon>Spermatophyta</taxon>
        <taxon>Magnoliopsida</taxon>
        <taxon>eudicotyledons</taxon>
        <taxon>Gunneridae</taxon>
        <taxon>Pentapetalae</taxon>
        <taxon>rosids</taxon>
        <taxon>malvids</taxon>
        <taxon>Brassicales</taxon>
        <taxon>Brassicaceae</taxon>
        <taxon>Camelineae</taxon>
        <taxon>Arabidopsis</taxon>
    </lineage>
</organism>
<evidence type="ECO:0000250" key="1"/>
<evidence type="ECO:0000255" key="2"/>
<evidence type="ECO:0000255" key="3">
    <source>
        <dbReference type="PROSITE-ProRule" id="PRU00712"/>
    </source>
</evidence>
<evidence type="ECO:0000255" key="4">
    <source>
        <dbReference type="PROSITE-ProRule" id="PRU00714"/>
    </source>
</evidence>
<evidence type="ECO:0000269" key="5">
    <source>
    </source>
</evidence>
<evidence type="ECO:0000269" key="6">
    <source>
    </source>
</evidence>
<evidence type="ECO:0000269" key="7">
    <source>
    </source>
</evidence>
<evidence type="ECO:0000305" key="8"/>
<protein>
    <recommendedName>
        <fullName>Phosphate transporter PHO1 homolog 10</fullName>
    </recommendedName>
    <alternativeName>
        <fullName>Protein PHO1 homolog 10</fullName>
        <shortName>AtPHO1;H10</shortName>
    </alternativeName>
</protein>
<dbReference type="EMBL" id="AY507962">
    <property type="protein sequence ID" value="AAR99492.1"/>
    <property type="molecule type" value="mRNA"/>
</dbReference>
<dbReference type="EMBL" id="AC073178">
    <property type="protein sequence ID" value="AAG60105.1"/>
    <property type="molecule type" value="Genomic_DNA"/>
</dbReference>
<dbReference type="EMBL" id="CP002684">
    <property type="protein sequence ID" value="AEE34930.1"/>
    <property type="molecule type" value="Genomic_DNA"/>
</dbReference>
<dbReference type="EMBL" id="CP002684">
    <property type="protein sequence ID" value="ANM57979.1"/>
    <property type="molecule type" value="Genomic_DNA"/>
</dbReference>
<dbReference type="RefSeq" id="NP_001320450.1">
    <property type="nucleotide sequence ID" value="NM_001334410.1"/>
</dbReference>
<dbReference type="RefSeq" id="NP_177107.2">
    <property type="nucleotide sequence ID" value="NM_105615.4"/>
</dbReference>
<dbReference type="SMR" id="Q6R8G0"/>
<dbReference type="FunCoup" id="Q6R8G0">
    <property type="interactions" value="2722"/>
</dbReference>
<dbReference type="STRING" id="3702.Q6R8G0"/>
<dbReference type="iPTMnet" id="Q6R8G0"/>
<dbReference type="PaxDb" id="3702-AT1G69480.1"/>
<dbReference type="ProteomicsDB" id="236145"/>
<dbReference type="EnsemblPlants" id="AT1G69480.1">
    <property type="protein sequence ID" value="AT1G69480.1"/>
    <property type="gene ID" value="AT1G69480"/>
</dbReference>
<dbReference type="EnsemblPlants" id="AT1G69480.2">
    <property type="protein sequence ID" value="AT1G69480.2"/>
    <property type="gene ID" value="AT1G69480"/>
</dbReference>
<dbReference type="GeneID" id="843280"/>
<dbReference type="Gramene" id="AT1G69480.1">
    <property type="protein sequence ID" value="AT1G69480.1"/>
    <property type="gene ID" value="AT1G69480"/>
</dbReference>
<dbReference type="Gramene" id="AT1G69480.2">
    <property type="protein sequence ID" value="AT1G69480.2"/>
    <property type="gene ID" value="AT1G69480"/>
</dbReference>
<dbReference type="KEGG" id="ath:AT1G69480"/>
<dbReference type="Araport" id="AT1G69480"/>
<dbReference type="TAIR" id="AT1G69480"/>
<dbReference type="eggNOG" id="KOG1162">
    <property type="taxonomic scope" value="Eukaryota"/>
</dbReference>
<dbReference type="HOGENOM" id="CLU_006116_2_0_1"/>
<dbReference type="InParanoid" id="Q6R8G0"/>
<dbReference type="OMA" id="NPYTWLF"/>
<dbReference type="PhylomeDB" id="Q6R8G0"/>
<dbReference type="PRO" id="PR:Q6R8G0"/>
<dbReference type="Proteomes" id="UP000006548">
    <property type="component" value="Chromosome 1"/>
</dbReference>
<dbReference type="ExpressionAtlas" id="Q6R8G0">
    <property type="expression patterns" value="baseline and differential"/>
</dbReference>
<dbReference type="GO" id="GO:0005886">
    <property type="term" value="C:plasma membrane"/>
    <property type="evidence" value="ECO:0007669"/>
    <property type="project" value="UniProtKB-SubCell"/>
</dbReference>
<dbReference type="GO" id="GO:0006817">
    <property type="term" value="P:phosphate ion transport"/>
    <property type="evidence" value="ECO:0007669"/>
    <property type="project" value="UniProtKB-KW"/>
</dbReference>
<dbReference type="CDD" id="cd14476">
    <property type="entry name" value="SPX_PHO1_like"/>
    <property type="match status" value="1"/>
</dbReference>
<dbReference type="InterPro" id="IPR004342">
    <property type="entry name" value="EXS_C"/>
</dbReference>
<dbReference type="InterPro" id="IPR034092">
    <property type="entry name" value="PHO1_SPX"/>
</dbReference>
<dbReference type="InterPro" id="IPR004331">
    <property type="entry name" value="SPX_dom"/>
</dbReference>
<dbReference type="PANTHER" id="PTHR10783:SF104">
    <property type="entry name" value="PHOSPHATE TRANSPORTER PHO1 HOMOLOG 10"/>
    <property type="match status" value="1"/>
</dbReference>
<dbReference type="PANTHER" id="PTHR10783">
    <property type="entry name" value="XENOTROPIC AND POLYTROPIC RETROVIRUS RECEPTOR 1-RELATED"/>
    <property type="match status" value="1"/>
</dbReference>
<dbReference type="Pfam" id="PF03124">
    <property type="entry name" value="EXS"/>
    <property type="match status" value="1"/>
</dbReference>
<dbReference type="Pfam" id="PF03105">
    <property type="entry name" value="SPX"/>
    <property type="match status" value="1"/>
</dbReference>
<dbReference type="PROSITE" id="PS51380">
    <property type="entry name" value="EXS"/>
    <property type="match status" value="1"/>
</dbReference>
<dbReference type="PROSITE" id="PS51382">
    <property type="entry name" value="SPX"/>
    <property type="match status" value="1"/>
</dbReference>